<protein>
    <recommendedName>
        <fullName evidence="1">Undecaprenyl phosphate-alpha-4-amino-4-deoxy-L-arabinose arabinosyl transferase</fullName>
        <ecNumber evidence="1">2.4.2.43</ecNumber>
    </recommendedName>
    <alternativeName>
        <fullName evidence="1">4-amino-4-deoxy-L-arabinose lipid A transferase</fullName>
    </alternativeName>
    <alternativeName>
        <fullName evidence="1">Lipid IV(A) 4-amino-4-deoxy-L-arabinosyltransferase</fullName>
    </alternativeName>
    <alternativeName>
        <fullName evidence="1">Undecaprenyl phosphate-alpha-L-Ara4N transferase</fullName>
    </alternativeName>
</protein>
<feature type="chain" id="PRO_0000380024" description="Undecaprenyl phosphate-alpha-4-amino-4-deoxy-L-arabinose arabinosyl transferase">
    <location>
        <begin position="1"/>
        <end position="548"/>
    </location>
</feature>
<feature type="transmembrane region" description="Helical" evidence="1">
    <location>
        <begin position="9"/>
        <end position="29"/>
    </location>
</feature>
<feature type="transmembrane region" description="Helical" evidence="1">
    <location>
        <begin position="82"/>
        <end position="102"/>
    </location>
</feature>
<feature type="transmembrane region" description="Helical" evidence="1">
    <location>
        <begin position="114"/>
        <end position="134"/>
    </location>
</feature>
<feature type="transmembrane region" description="Helical" evidence="1">
    <location>
        <begin position="137"/>
        <end position="157"/>
    </location>
</feature>
<feature type="transmembrane region" description="Helical" evidence="1">
    <location>
        <begin position="163"/>
        <end position="185"/>
    </location>
</feature>
<feature type="transmembrane region" description="Helical" evidence="1">
    <location>
        <begin position="205"/>
        <end position="225"/>
    </location>
</feature>
<feature type="transmembrane region" description="Helical" evidence="1">
    <location>
        <begin position="256"/>
        <end position="276"/>
    </location>
</feature>
<feature type="transmembrane region" description="Helical" evidence="1">
    <location>
        <begin position="289"/>
        <end position="309"/>
    </location>
</feature>
<feature type="transmembrane region" description="Helical" evidence="1">
    <location>
        <begin position="311"/>
        <end position="331"/>
    </location>
</feature>
<feature type="transmembrane region" description="Helical" evidence="1">
    <location>
        <begin position="345"/>
        <end position="365"/>
    </location>
</feature>
<feature type="transmembrane region" description="Helical" evidence="1">
    <location>
        <begin position="381"/>
        <end position="401"/>
    </location>
</feature>
<feature type="transmembrane region" description="Helical" evidence="1">
    <location>
        <begin position="405"/>
        <end position="425"/>
    </location>
</feature>
<accession>B5EZI0</accession>
<keyword id="KW-0997">Cell inner membrane</keyword>
<keyword id="KW-1003">Cell membrane</keyword>
<keyword id="KW-0328">Glycosyltransferase</keyword>
<keyword id="KW-0441">Lipid A biosynthesis</keyword>
<keyword id="KW-0444">Lipid biosynthesis</keyword>
<keyword id="KW-0443">Lipid metabolism</keyword>
<keyword id="KW-0448">Lipopolysaccharide biosynthesis</keyword>
<keyword id="KW-0472">Membrane</keyword>
<keyword id="KW-0808">Transferase</keyword>
<keyword id="KW-0812">Transmembrane</keyword>
<keyword id="KW-1133">Transmembrane helix</keyword>
<gene>
    <name evidence="1" type="primary">arnT</name>
    <name type="ordered locus">SeAg_B2437</name>
</gene>
<dbReference type="EC" id="2.4.2.43" evidence="1"/>
<dbReference type="EMBL" id="CP001138">
    <property type="protein sequence ID" value="ACH48870.1"/>
    <property type="molecule type" value="Genomic_DNA"/>
</dbReference>
<dbReference type="RefSeq" id="WP_000978050.1">
    <property type="nucleotide sequence ID" value="NC_011149.1"/>
</dbReference>
<dbReference type="SMR" id="B5EZI0"/>
<dbReference type="CAZy" id="GT83">
    <property type="family name" value="Glycosyltransferase Family 83"/>
</dbReference>
<dbReference type="KEGG" id="sea:SeAg_B2437"/>
<dbReference type="HOGENOM" id="CLU_019200_2_1_6"/>
<dbReference type="UniPathway" id="UPA00037"/>
<dbReference type="Proteomes" id="UP000008819">
    <property type="component" value="Chromosome"/>
</dbReference>
<dbReference type="GO" id="GO:0005886">
    <property type="term" value="C:plasma membrane"/>
    <property type="evidence" value="ECO:0007669"/>
    <property type="project" value="UniProtKB-SubCell"/>
</dbReference>
<dbReference type="GO" id="GO:0103015">
    <property type="term" value="F:4-amino-4-deoxy-L-arabinose transferase activity"/>
    <property type="evidence" value="ECO:0007669"/>
    <property type="project" value="UniProtKB-EC"/>
</dbReference>
<dbReference type="GO" id="GO:0000030">
    <property type="term" value="F:mannosyltransferase activity"/>
    <property type="evidence" value="ECO:0007669"/>
    <property type="project" value="InterPro"/>
</dbReference>
<dbReference type="GO" id="GO:0009245">
    <property type="term" value="P:lipid A biosynthetic process"/>
    <property type="evidence" value="ECO:0007669"/>
    <property type="project" value="UniProtKB-UniRule"/>
</dbReference>
<dbReference type="GO" id="GO:0009103">
    <property type="term" value="P:lipopolysaccharide biosynthetic process"/>
    <property type="evidence" value="ECO:0007669"/>
    <property type="project" value="UniProtKB-KW"/>
</dbReference>
<dbReference type="GO" id="GO:0006493">
    <property type="term" value="P:protein O-linked glycosylation"/>
    <property type="evidence" value="ECO:0007669"/>
    <property type="project" value="InterPro"/>
</dbReference>
<dbReference type="GO" id="GO:0010041">
    <property type="term" value="P:response to iron(III) ion"/>
    <property type="evidence" value="ECO:0007669"/>
    <property type="project" value="TreeGrafter"/>
</dbReference>
<dbReference type="HAMAP" id="MF_01165">
    <property type="entry name" value="ArnT_transfer"/>
    <property type="match status" value="1"/>
</dbReference>
<dbReference type="InterPro" id="IPR022839">
    <property type="entry name" value="ArnT_tfrase"/>
</dbReference>
<dbReference type="InterPro" id="IPR003342">
    <property type="entry name" value="Glyco_trans_39/83"/>
</dbReference>
<dbReference type="InterPro" id="IPR050297">
    <property type="entry name" value="LipidA_mod_glycosyltrf_83"/>
</dbReference>
<dbReference type="NCBIfam" id="NF009784">
    <property type="entry name" value="PRK13279.1"/>
    <property type="match status" value="1"/>
</dbReference>
<dbReference type="PANTHER" id="PTHR33908">
    <property type="entry name" value="MANNOSYLTRANSFERASE YKCB-RELATED"/>
    <property type="match status" value="1"/>
</dbReference>
<dbReference type="PANTHER" id="PTHR33908:SF3">
    <property type="entry name" value="UNDECAPRENYL PHOSPHATE-ALPHA-4-AMINO-4-DEOXY-L-ARABINOSE ARABINOSYL TRANSFERASE"/>
    <property type="match status" value="1"/>
</dbReference>
<dbReference type="Pfam" id="PF02366">
    <property type="entry name" value="PMT"/>
    <property type="match status" value="1"/>
</dbReference>
<comment type="function">
    <text evidence="1">Catalyzes the transfer of the L-Ara4N moiety of the glycolipid undecaprenyl phosphate-alpha-L-Ara4N to lipid A. The modified arabinose is attached to lipid A and is required for resistance to polymyxin and cationic antimicrobial peptides.</text>
</comment>
<comment type="catalytic activity">
    <reaction evidence="1">
        <text>4-amino-4-deoxy-alpha-L-arabinopyranosyl di-trans,octa-cis-undecaprenyl phosphate + lipid IVA = lipid IIA + di-trans,octa-cis-undecaprenyl phosphate.</text>
        <dbReference type="EC" id="2.4.2.43"/>
    </reaction>
</comment>
<comment type="pathway">
    <text evidence="1">Lipopolysaccharide metabolism; 4-amino-4-deoxy-beta-L-arabinose-lipid A biosynthesis.</text>
</comment>
<comment type="subcellular location">
    <subcellularLocation>
        <location evidence="1">Cell inner membrane</location>
        <topology evidence="1">Multi-pass membrane protein</topology>
    </subcellularLocation>
</comment>
<comment type="similarity">
    <text evidence="1">Belongs to the glycosyltransferase 83 family.</text>
</comment>
<proteinExistence type="inferred from homology"/>
<sequence length="548" mass="61805">MMKSIRYYLAFAAFIALYYVIPVNSRLLWQPDETRYAEISREMLASGDWIVPHFLGLRYFEKPIAGYWINSLGQWLFGATNFGVRAGAILTTLLAAALVAWLTFRLWRDKRTALLASVIFLSLFAVYSIGTYAVLDPMIALWLTAGMCCFWQGMQATTRTGKIGMFLLLGATCGLGVLTKGFLALAVPVVSVLPWVIVQKRWKDFLLYGWLAVLSCFVVVLPWAIAIARREADFWHYFFWVEHIQRFAMSDAQHKAPFWYYLPVLLAGSLPWLGLLPGALKLGWRERNGAFYLLGWTIMPLLFFSIAKGKLPTYVLSCFAPIAILMARFVLHNVKEGVAALRVNGGINLVFGIIGIVAAFVVSSWGPLKSPVWTHIETYKVFCVWGVFTVWAFVGWYSLCHSQKYLLPAFCPLGLALLFGFSIPDRVMESKQPQFFVEMTQAPLASSRYILADNVGVAAGLAWSLKRDDIMLYGHAGELRYGLSYPDVQDKFVKADDFNAWLNQHRQEGIITLVLSIAKDEDISALSLPPADNIDYQGRLVLIQYRPK</sequence>
<organism>
    <name type="scientific">Salmonella agona (strain SL483)</name>
    <dbReference type="NCBI Taxonomy" id="454166"/>
    <lineage>
        <taxon>Bacteria</taxon>
        <taxon>Pseudomonadati</taxon>
        <taxon>Pseudomonadota</taxon>
        <taxon>Gammaproteobacteria</taxon>
        <taxon>Enterobacterales</taxon>
        <taxon>Enterobacteriaceae</taxon>
        <taxon>Salmonella</taxon>
    </lineage>
</organism>
<evidence type="ECO:0000255" key="1">
    <source>
        <dbReference type="HAMAP-Rule" id="MF_01165"/>
    </source>
</evidence>
<reference key="1">
    <citation type="journal article" date="2011" name="J. Bacteriol.">
        <title>Comparative genomics of 28 Salmonella enterica isolates: evidence for CRISPR-mediated adaptive sublineage evolution.</title>
        <authorList>
            <person name="Fricke W.F."/>
            <person name="Mammel M.K."/>
            <person name="McDermott P.F."/>
            <person name="Tartera C."/>
            <person name="White D.G."/>
            <person name="Leclerc J.E."/>
            <person name="Ravel J."/>
            <person name="Cebula T.A."/>
        </authorList>
    </citation>
    <scope>NUCLEOTIDE SEQUENCE [LARGE SCALE GENOMIC DNA]</scope>
    <source>
        <strain>SL483</strain>
    </source>
</reference>
<name>ARNT_SALA4</name>